<organism>
    <name type="scientific">Cyanidioschyzon merolae (strain NIES-3377 / 10D)</name>
    <name type="common">Unicellular red alga</name>
    <dbReference type="NCBI Taxonomy" id="280699"/>
    <lineage>
        <taxon>Eukaryota</taxon>
        <taxon>Rhodophyta</taxon>
        <taxon>Bangiophyceae</taxon>
        <taxon>Cyanidiales</taxon>
        <taxon>Cyanidiaceae</taxon>
        <taxon>Cyanidioschyzon</taxon>
    </lineage>
</organism>
<keyword id="KW-0150">Chloroplast</keyword>
<keyword id="KW-0934">Plastid</keyword>
<keyword id="KW-1185">Reference proteome</keyword>
<keyword id="KW-0687">Ribonucleoprotein</keyword>
<keyword id="KW-0689">Ribosomal protein</keyword>
<keyword id="KW-0694">RNA-binding</keyword>
<keyword id="KW-0699">rRNA-binding</keyword>
<sequence>MKKSKRTDRKGSIHIQSTFNNTLITVSDAQGACVCWSSAGLVGFKGAKKGTPFAAGMAAEKVAQLAKDQGMKQVDVFVKGPGAGRETAIRALEAAGLQITSIQDVTGIPHNGCRPPKRRRV</sequence>
<evidence type="ECO:0000255" key="1">
    <source>
        <dbReference type="HAMAP-Rule" id="MF_01310"/>
    </source>
</evidence>
<evidence type="ECO:0000305" key="2"/>
<feature type="chain" id="PRO_0000123298" description="Small ribosomal subunit protein uS11c">
    <location>
        <begin position="1"/>
        <end position="121"/>
    </location>
</feature>
<dbReference type="EMBL" id="AB002583">
    <property type="protein sequence ID" value="BAC76251.1"/>
    <property type="molecule type" value="Genomic_DNA"/>
</dbReference>
<dbReference type="RefSeq" id="NP_849089.1">
    <property type="nucleotide sequence ID" value="NC_004799.1"/>
</dbReference>
<dbReference type="SMR" id="Q85FU4"/>
<dbReference type="STRING" id="280699.Q85FU4"/>
<dbReference type="EnsemblPlants" id="CMV184CT">
    <property type="protein sequence ID" value="CMV184CT"/>
    <property type="gene ID" value="CMV184C"/>
</dbReference>
<dbReference type="GeneID" id="845000"/>
<dbReference type="Gramene" id="CMV184CT">
    <property type="protein sequence ID" value="CMV184CT"/>
    <property type="gene ID" value="CMV184C"/>
</dbReference>
<dbReference type="KEGG" id="cme:CymeCp157"/>
<dbReference type="eggNOG" id="KOG0408">
    <property type="taxonomic scope" value="Eukaryota"/>
</dbReference>
<dbReference type="HOGENOM" id="CLU_072439_5_0_1"/>
<dbReference type="Proteomes" id="UP000007014">
    <property type="component" value="Chloroplast"/>
</dbReference>
<dbReference type="GO" id="GO:0009507">
    <property type="term" value="C:chloroplast"/>
    <property type="evidence" value="ECO:0007669"/>
    <property type="project" value="UniProtKB-SubCell"/>
</dbReference>
<dbReference type="GO" id="GO:1990904">
    <property type="term" value="C:ribonucleoprotein complex"/>
    <property type="evidence" value="ECO:0007669"/>
    <property type="project" value="UniProtKB-KW"/>
</dbReference>
<dbReference type="GO" id="GO:0005840">
    <property type="term" value="C:ribosome"/>
    <property type="evidence" value="ECO:0007669"/>
    <property type="project" value="UniProtKB-KW"/>
</dbReference>
<dbReference type="GO" id="GO:0019843">
    <property type="term" value="F:rRNA binding"/>
    <property type="evidence" value="ECO:0007669"/>
    <property type="project" value="UniProtKB-UniRule"/>
</dbReference>
<dbReference type="GO" id="GO:0003735">
    <property type="term" value="F:structural constituent of ribosome"/>
    <property type="evidence" value="ECO:0007669"/>
    <property type="project" value="InterPro"/>
</dbReference>
<dbReference type="GO" id="GO:0006412">
    <property type="term" value="P:translation"/>
    <property type="evidence" value="ECO:0007669"/>
    <property type="project" value="UniProtKB-UniRule"/>
</dbReference>
<dbReference type="FunFam" id="3.30.420.80:FF:000010">
    <property type="entry name" value="30S ribosomal protein S11"/>
    <property type="match status" value="1"/>
</dbReference>
<dbReference type="Gene3D" id="3.30.420.80">
    <property type="entry name" value="Ribosomal protein S11"/>
    <property type="match status" value="1"/>
</dbReference>
<dbReference type="HAMAP" id="MF_01310">
    <property type="entry name" value="Ribosomal_uS11"/>
    <property type="match status" value="1"/>
</dbReference>
<dbReference type="InterPro" id="IPR001971">
    <property type="entry name" value="Ribosomal_uS11"/>
</dbReference>
<dbReference type="InterPro" id="IPR019981">
    <property type="entry name" value="Ribosomal_uS11_bac-type"/>
</dbReference>
<dbReference type="InterPro" id="IPR036967">
    <property type="entry name" value="Ribosomal_uS11_sf"/>
</dbReference>
<dbReference type="NCBIfam" id="NF003698">
    <property type="entry name" value="PRK05309.1"/>
    <property type="match status" value="1"/>
</dbReference>
<dbReference type="NCBIfam" id="TIGR03632">
    <property type="entry name" value="uS11_bact"/>
    <property type="match status" value="1"/>
</dbReference>
<dbReference type="PANTHER" id="PTHR11759">
    <property type="entry name" value="40S RIBOSOMAL PROTEIN S14/30S RIBOSOMAL PROTEIN S11"/>
    <property type="match status" value="1"/>
</dbReference>
<dbReference type="Pfam" id="PF00411">
    <property type="entry name" value="Ribosomal_S11"/>
    <property type="match status" value="1"/>
</dbReference>
<dbReference type="PIRSF" id="PIRSF002131">
    <property type="entry name" value="Ribosomal_S11"/>
    <property type="match status" value="1"/>
</dbReference>
<dbReference type="SUPFAM" id="SSF53137">
    <property type="entry name" value="Translational machinery components"/>
    <property type="match status" value="1"/>
</dbReference>
<reference key="1">
    <citation type="journal article" date="2003" name="DNA Res.">
        <title>Complete sequence and analysis of the plastid genome of the unicellular red alga Cyanidioschyzon merolae.</title>
        <authorList>
            <person name="Ohta N."/>
            <person name="Matsuzaki M."/>
            <person name="Misumi O."/>
            <person name="Miyagishima S.-Y."/>
            <person name="Nozaki H."/>
            <person name="Tanaka K."/>
            <person name="Shin-i T."/>
            <person name="Kohara Y."/>
            <person name="Kuroiwa T."/>
        </authorList>
    </citation>
    <scope>NUCLEOTIDE SEQUENCE [LARGE SCALE GENOMIC DNA]</scope>
    <source>
        <strain>NIES-3377 / 10D</strain>
    </source>
</reference>
<comment type="subunit">
    <text evidence="1">Part of the 30S ribosomal subunit.</text>
</comment>
<comment type="subcellular location">
    <subcellularLocation>
        <location>Plastid</location>
        <location>Chloroplast</location>
    </subcellularLocation>
</comment>
<comment type="similarity">
    <text evidence="1">Belongs to the universal ribosomal protein uS11 family.</text>
</comment>
<protein>
    <recommendedName>
        <fullName evidence="1">Small ribosomal subunit protein uS11c</fullName>
    </recommendedName>
    <alternativeName>
        <fullName evidence="2">30S ribosomal protein S11, chloroplastic</fullName>
    </alternativeName>
</protein>
<gene>
    <name evidence="1" type="primary">rps11</name>
</gene>
<name>RR11_CYAM1</name>
<proteinExistence type="inferred from homology"/>
<geneLocation type="chloroplast"/>
<accession>Q85FU4</accession>